<dbReference type="EMBL" id="CP000450">
    <property type="protein sequence ID" value="ABI58849.1"/>
    <property type="molecule type" value="Genomic_DNA"/>
</dbReference>
<dbReference type="RefSeq" id="WP_011633691.1">
    <property type="nucleotide sequence ID" value="NC_008344.1"/>
</dbReference>
<dbReference type="SMR" id="Q0AIH7"/>
<dbReference type="STRING" id="335283.Neut_0577"/>
<dbReference type="KEGG" id="net:Neut_0577"/>
<dbReference type="eggNOG" id="COG0200">
    <property type="taxonomic scope" value="Bacteria"/>
</dbReference>
<dbReference type="HOGENOM" id="CLU_055188_4_2_4"/>
<dbReference type="OrthoDB" id="9810293at2"/>
<dbReference type="Proteomes" id="UP000001966">
    <property type="component" value="Chromosome"/>
</dbReference>
<dbReference type="GO" id="GO:0022625">
    <property type="term" value="C:cytosolic large ribosomal subunit"/>
    <property type="evidence" value="ECO:0007669"/>
    <property type="project" value="TreeGrafter"/>
</dbReference>
<dbReference type="GO" id="GO:0019843">
    <property type="term" value="F:rRNA binding"/>
    <property type="evidence" value="ECO:0007669"/>
    <property type="project" value="UniProtKB-UniRule"/>
</dbReference>
<dbReference type="GO" id="GO:0003735">
    <property type="term" value="F:structural constituent of ribosome"/>
    <property type="evidence" value="ECO:0007669"/>
    <property type="project" value="InterPro"/>
</dbReference>
<dbReference type="GO" id="GO:0006412">
    <property type="term" value="P:translation"/>
    <property type="evidence" value="ECO:0007669"/>
    <property type="project" value="UniProtKB-UniRule"/>
</dbReference>
<dbReference type="Gene3D" id="3.100.10.10">
    <property type="match status" value="1"/>
</dbReference>
<dbReference type="HAMAP" id="MF_01341">
    <property type="entry name" value="Ribosomal_uL15"/>
    <property type="match status" value="1"/>
</dbReference>
<dbReference type="InterPro" id="IPR030878">
    <property type="entry name" value="Ribosomal_uL15"/>
</dbReference>
<dbReference type="InterPro" id="IPR036227">
    <property type="entry name" value="Ribosomal_uL15/eL18_sf"/>
</dbReference>
<dbReference type="InterPro" id="IPR005749">
    <property type="entry name" value="Ribosomal_uL15_bac-type"/>
</dbReference>
<dbReference type="NCBIfam" id="TIGR01071">
    <property type="entry name" value="rplO_bact"/>
    <property type="match status" value="1"/>
</dbReference>
<dbReference type="PANTHER" id="PTHR12934">
    <property type="entry name" value="50S RIBOSOMAL PROTEIN L15"/>
    <property type="match status" value="1"/>
</dbReference>
<dbReference type="PANTHER" id="PTHR12934:SF11">
    <property type="entry name" value="LARGE RIBOSOMAL SUBUNIT PROTEIN UL15M"/>
    <property type="match status" value="1"/>
</dbReference>
<dbReference type="SUPFAM" id="SSF52080">
    <property type="entry name" value="Ribosomal proteins L15p and L18e"/>
    <property type="match status" value="1"/>
</dbReference>
<gene>
    <name evidence="1" type="primary">rplO</name>
    <name type="ordered locus">Neut_0577</name>
</gene>
<sequence length="153" mass="16902">MRLNTIKPGMGSTKPRRRVGRGIGSGLGKTCGRGHKGQKSRAGGFHKIGFEGGQMPLQRRLPKRGFVVYGKKQIQEIKLSSLLLIDRNEFDTSVLHEFNLIKSINYPVKIIADAQACTRAIRLKDLRVTRGVKDIVEHAGGQVELTIEDVNGI</sequence>
<organism>
    <name type="scientific">Nitrosomonas eutropha (strain DSM 101675 / C91 / Nm57)</name>
    <dbReference type="NCBI Taxonomy" id="335283"/>
    <lineage>
        <taxon>Bacteria</taxon>
        <taxon>Pseudomonadati</taxon>
        <taxon>Pseudomonadota</taxon>
        <taxon>Betaproteobacteria</taxon>
        <taxon>Nitrosomonadales</taxon>
        <taxon>Nitrosomonadaceae</taxon>
        <taxon>Nitrosomonas</taxon>
    </lineage>
</organism>
<keyword id="KW-0687">Ribonucleoprotein</keyword>
<keyword id="KW-0689">Ribosomal protein</keyword>
<keyword id="KW-0694">RNA-binding</keyword>
<keyword id="KW-0699">rRNA-binding</keyword>
<evidence type="ECO:0000255" key="1">
    <source>
        <dbReference type="HAMAP-Rule" id="MF_01341"/>
    </source>
</evidence>
<evidence type="ECO:0000256" key="2">
    <source>
        <dbReference type="SAM" id="MobiDB-lite"/>
    </source>
</evidence>
<evidence type="ECO:0000305" key="3"/>
<protein>
    <recommendedName>
        <fullName evidence="1">Large ribosomal subunit protein uL15</fullName>
    </recommendedName>
    <alternativeName>
        <fullName evidence="3">50S ribosomal protein L15</fullName>
    </alternativeName>
</protein>
<accession>Q0AIH7</accession>
<comment type="function">
    <text evidence="1">Binds to the 23S rRNA.</text>
</comment>
<comment type="subunit">
    <text evidence="1">Part of the 50S ribosomal subunit.</text>
</comment>
<comment type="similarity">
    <text evidence="1">Belongs to the universal ribosomal protein uL15 family.</text>
</comment>
<reference key="1">
    <citation type="journal article" date="2007" name="Environ. Microbiol.">
        <title>Whole-genome analysis of the ammonia-oxidizing bacterium, Nitrosomonas eutropha C91: implications for niche adaptation.</title>
        <authorList>
            <person name="Stein L.Y."/>
            <person name="Arp D.J."/>
            <person name="Berube P.M."/>
            <person name="Chain P.S."/>
            <person name="Hauser L."/>
            <person name="Jetten M.S."/>
            <person name="Klotz M.G."/>
            <person name="Larimer F.W."/>
            <person name="Norton J.M."/>
            <person name="Op den Camp H.J.M."/>
            <person name="Shin M."/>
            <person name="Wei X."/>
        </authorList>
    </citation>
    <scope>NUCLEOTIDE SEQUENCE [LARGE SCALE GENOMIC DNA]</scope>
    <source>
        <strain>DSM 101675 / C91 / Nm57</strain>
    </source>
</reference>
<proteinExistence type="inferred from homology"/>
<name>RL15_NITEC</name>
<feature type="chain" id="PRO_1000054501" description="Large ribosomal subunit protein uL15">
    <location>
        <begin position="1"/>
        <end position="153"/>
    </location>
</feature>
<feature type="region of interest" description="Disordered" evidence="2">
    <location>
        <begin position="1"/>
        <end position="42"/>
    </location>
</feature>
<feature type="compositionally biased region" description="Gly residues" evidence="2">
    <location>
        <begin position="21"/>
        <end position="31"/>
    </location>
</feature>